<gene>
    <name evidence="1" type="primary">mqo</name>
    <name type="ordered locus">GK1396</name>
</gene>
<keyword id="KW-0274">FAD</keyword>
<keyword id="KW-0285">Flavoprotein</keyword>
<keyword id="KW-0560">Oxidoreductase</keyword>
<keyword id="KW-1185">Reference proteome</keyword>
<keyword id="KW-0816">Tricarboxylic acid cycle</keyword>
<protein>
    <recommendedName>
        <fullName evidence="1">Probable malate:quinone oxidoreductase</fullName>
        <ecNumber evidence="1">1.1.5.4</ecNumber>
    </recommendedName>
    <alternativeName>
        <fullName evidence="1">MQO</fullName>
    </alternativeName>
    <alternativeName>
        <fullName evidence="1">Malate dehydrogenase [quinone]</fullName>
    </alternativeName>
</protein>
<reference key="1">
    <citation type="journal article" date="2004" name="Nucleic Acids Res.">
        <title>Thermoadaptation trait revealed by the genome sequence of thermophilic Geobacillus kaustophilus.</title>
        <authorList>
            <person name="Takami H."/>
            <person name="Takaki Y."/>
            <person name="Chee G.-J."/>
            <person name="Nishi S."/>
            <person name="Shimamura S."/>
            <person name="Suzuki H."/>
            <person name="Matsui S."/>
            <person name="Uchiyama I."/>
        </authorList>
    </citation>
    <scope>NUCLEOTIDE SEQUENCE [LARGE SCALE GENOMIC DNA]</scope>
    <source>
        <strain>HTA426</strain>
    </source>
</reference>
<dbReference type="EC" id="1.1.5.4" evidence="1"/>
<dbReference type="EMBL" id="BA000043">
    <property type="protein sequence ID" value="BAD75681.1"/>
    <property type="molecule type" value="Genomic_DNA"/>
</dbReference>
<dbReference type="SMR" id="Q5L055"/>
<dbReference type="STRING" id="235909.GK1396"/>
<dbReference type="KEGG" id="gka:GK1396"/>
<dbReference type="PATRIC" id="fig|235909.7.peg.1508"/>
<dbReference type="eggNOG" id="COG0579">
    <property type="taxonomic scope" value="Bacteria"/>
</dbReference>
<dbReference type="HOGENOM" id="CLU_028151_0_0_9"/>
<dbReference type="UniPathway" id="UPA00223">
    <property type="reaction ID" value="UER01008"/>
</dbReference>
<dbReference type="Proteomes" id="UP000001172">
    <property type="component" value="Chromosome"/>
</dbReference>
<dbReference type="GO" id="GO:0047545">
    <property type="term" value="F:2-hydroxyglutarate dehydrogenase activity"/>
    <property type="evidence" value="ECO:0007669"/>
    <property type="project" value="TreeGrafter"/>
</dbReference>
<dbReference type="GO" id="GO:0008924">
    <property type="term" value="F:L-malate dehydrogenase (quinone) activity"/>
    <property type="evidence" value="ECO:0007669"/>
    <property type="project" value="UniProtKB-UniRule"/>
</dbReference>
<dbReference type="GO" id="GO:0006099">
    <property type="term" value="P:tricarboxylic acid cycle"/>
    <property type="evidence" value="ECO:0007669"/>
    <property type="project" value="UniProtKB-UniRule"/>
</dbReference>
<dbReference type="Gene3D" id="3.30.9.10">
    <property type="entry name" value="D-Amino Acid Oxidase, subunit A, domain 2"/>
    <property type="match status" value="1"/>
</dbReference>
<dbReference type="Gene3D" id="3.50.50.60">
    <property type="entry name" value="FAD/NAD(P)-binding domain"/>
    <property type="match status" value="1"/>
</dbReference>
<dbReference type="HAMAP" id="MF_00212">
    <property type="entry name" value="MQO"/>
    <property type="match status" value="1"/>
</dbReference>
<dbReference type="InterPro" id="IPR036188">
    <property type="entry name" value="FAD/NAD-bd_sf"/>
</dbReference>
<dbReference type="InterPro" id="IPR006231">
    <property type="entry name" value="MQO"/>
</dbReference>
<dbReference type="NCBIfam" id="TIGR01320">
    <property type="entry name" value="mal_quin_oxido"/>
    <property type="match status" value="1"/>
</dbReference>
<dbReference type="NCBIfam" id="NF003603">
    <property type="entry name" value="PRK05257.1-1"/>
    <property type="match status" value="1"/>
</dbReference>
<dbReference type="NCBIfam" id="NF003604">
    <property type="entry name" value="PRK05257.1-3"/>
    <property type="match status" value="1"/>
</dbReference>
<dbReference type="NCBIfam" id="NF003605">
    <property type="entry name" value="PRK05257.1-4"/>
    <property type="match status" value="1"/>
</dbReference>
<dbReference type="NCBIfam" id="NF003606">
    <property type="entry name" value="PRK05257.2-1"/>
    <property type="match status" value="1"/>
</dbReference>
<dbReference type="NCBIfam" id="NF003608">
    <property type="entry name" value="PRK05257.2-4"/>
    <property type="match status" value="1"/>
</dbReference>
<dbReference type="NCBIfam" id="NF003609">
    <property type="entry name" value="PRK05257.2-5"/>
    <property type="match status" value="1"/>
</dbReference>
<dbReference type="NCBIfam" id="NF003610">
    <property type="entry name" value="PRK05257.3-1"/>
    <property type="match status" value="1"/>
</dbReference>
<dbReference type="NCBIfam" id="NF003611">
    <property type="entry name" value="PRK05257.3-2"/>
    <property type="match status" value="1"/>
</dbReference>
<dbReference type="NCBIfam" id="NF009875">
    <property type="entry name" value="PRK13339.1"/>
    <property type="match status" value="1"/>
</dbReference>
<dbReference type="PANTHER" id="PTHR43104">
    <property type="entry name" value="L-2-HYDROXYGLUTARATE DEHYDROGENASE, MITOCHONDRIAL"/>
    <property type="match status" value="1"/>
</dbReference>
<dbReference type="PANTHER" id="PTHR43104:SF2">
    <property type="entry name" value="L-2-HYDROXYGLUTARATE DEHYDROGENASE, MITOCHONDRIAL"/>
    <property type="match status" value="1"/>
</dbReference>
<dbReference type="Pfam" id="PF06039">
    <property type="entry name" value="Mqo"/>
    <property type="match status" value="1"/>
</dbReference>
<dbReference type="SUPFAM" id="SSF51905">
    <property type="entry name" value="FAD/NAD(P)-binding domain"/>
    <property type="match status" value="1"/>
</dbReference>
<sequence length="501" mass="55200">MGNKQGKMDVILIGAGIMSATLGTLLKELAPEWDIVVFERLEEAGAESSNEWNNAGTGHAALCELNYTVEKADGSIDIGKAIKINEQFYVSLQFWAYLVNSGILRDPKDFVRPLPHMSFVQGEDNVAFLKKRHETMAANPLFKGMEFTDDPKKLAEWVPLMMEGRVVDEPIAATRIESGTDVNFGALTRQLFEHLKRKNVEIRYRHHVEDIKRTSDGLWELKVRNLDTGTVELHAAKFVFIGAGGGSLHLLQKSGIPEGKGIGGFPVSGLFMVCNNPEVVEQHHAKVYGKAKVGAPPMSVPHLDTRFIDNQKMLLFGPFAGFSPKFLKNGSMLDLFTSIKPHNVLTILAAGVKNMSLTNYLIQQVLLSKEQRMQELREFVPTAKSDEWDIVVAGQRVQVIKDTESGGKGTLQFGTEVVHAADGSIAALLGASPGASTAVHVMLEVMEKCFPERMNEWRAKVKEMIPSYGESLMKNEALLRQVQASTAEALGLNGHFAMQLA</sequence>
<evidence type="ECO:0000255" key="1">
    <source>
        <dbReference type="HAMAP-Rule" id="MF_00212"/>
    </source>
</evidence>
<organism>
    <name type="scientific">Geobacillus kaustophilus (strain HTA426)</name>
    <dbReference type="NCBI Taxonomy" id="235909"/>
    <lineage>
        <taxon>Bacteria</taxon>
        <taxon>Bacillati</taxon>
        <taxon>Bacillota</taxon>
        <taxon>Bacilli</taxon>
        <taxon>Bacillales</taxon>
        <taxon>Anoxybacillaceae</taxon>
        <taxon>Geobacillus</taxon>
        <taxon>Geobacillus thermoleovorans group</taxon>
    </lineage>
</organism>
<feature type="chain" id="PRO_1000023801" description="Probable malate:quinone oxidoreductase">
    <location>
        <begin position="1"/>
        <end position="501"/>
    </location>
</feature>
<accession>Q5L055</accession>
<name>MQO_GEOKA</name>
<comment type="catalytic activity">
    <reaction evidence="1">
        <text>(S)-malate + a quinone = a quinol + oxaloacetate</text>
        <dbReference type="Rhea" id="RHEA:46012"/>
        <dbReference type="ChEBI" id="CHEBI:15589"/>
        <dbReference type="ChEBI" id="CHEBI:16452"/>
        <dbReference type="ChEBI" id="CHEBI:24646"/>
        <dbReference type="ChEBI" id="CHEBI:132124"/>
        <dbReference type="EC" id="1.1.5.4"/>
    </reaction>
</comment>
<comment type="cofactor">
    <cofactor evidence="1">
        <name>FAD</name>
        <dbReference type="ChEBI" id="CHEBI:57692"/>
    </cofactor>
</comment>
<comment type="pathway">
    <text evidence="1">Carbohydrate metabolism; tricarboxylic acid cycle; oxaloacetate from (S)-malate (quinone route): step 1/1.</text>
</comment>
<comment type="similarity">
    <text evidence="1">Belongs to the MQO family.</text>
</comment>
<proteinExistence type="inferred from homology"/>